<feature type="chain" id="PRO_1000131087" description="Putative pre-16S rRNA nuclease">
    <location>
        <begin position="1"/>
        <end position="155"/>
    </location>
</feature>
<organism>
    <name type="scientific">Xanthomonas oryzae pv. oryzae (strain PXO99A)</name>
    <dbReference type="NCBI Taxonomy" id="360094"/>
    <lineage>
        <taxon>Bacteria</taxon>
        <taxon>Pseudomonadati</taxon>
        <taxon>Pseudomonadota</taxon>
        <taxon>Gammaproteobacteria</taxon>
        <taxon>Lysobacterales</taxon>
        <taxon>Lysobacteraceae</taxon>
        <taxon>Xanthomonas</taxon>
    </lineage>
</organism>
<sequence>MPEAGAILPDGTVLGFDVGSRRIGVAVGTALGAGARAVAVINVHASGPDWDALDRVHKEWRPDGLVVGDPLTLDDKHQPARKRAHAFARQLRERYALPVVLIDERSSSVEAAQRFARERADGRKRRRDAEALDAMAAAVIVERWLAAPDQATLLP</sequence>
<gene>
    <name type="ordered locus">PXO_02001</name>
</gene>
<comment type="function">
    <text evidence="1">Could be a nuclease involved in processing of the 5'-end of pre-16S rRNA.</text>
</comment>
<comment type="subcellular location">
    <subcellularLocation>
        <location evidence="1">Cytoplasm</location>
    </subcellularLocation>
</comment>
<comment type="similarity">
    <text evidence="1">Belongs to the YqgF nuclease family.</text>
</comment>
<keyword id="KW-0963">Cytoplasm</keyword>
<keyword id="KW-0378">Hydrolase</keyword>
<keyword id="KW-0540">Nuclease</keyword>
<keyword id="KW-0690">Ribosome biogenesis</keyword>
<dbReference type="EC" id="3.1.-.-" evidence="1"/>
<dbReference type="EMBL" id="CP000967">
    <property type="protein sequence ID" value="ACD60371.1"/>
    <property type="molecule type" value="Genomic_DNA"/>
</dbReference>
<dbReference type="SMR" id="B2SIZ4"/>
<dbReference type="KEGG" id="xop:PXO_02001"/>
<dbReference type="eggNOG" id="COG0816">
    <property type="taxonomic scope" value="Bacteria"/>
</dbReference>
<dbReference type="HOGENOM" id="CLU_098240_3_2_6"/>
<dbReference type="Proteomes" id="UP000001740">
    <property type="component" value="Chromosome"/>
</dbReference>
<dbReference type="GO" id="GO:0005829">
    <property type="term" value="C:cytosol"/>
    <property type="evidence" value="ECO:0007669"/>
    <property type="project" value="TreeGrafter"/>
</dbReference>
<dbReference type="GO" id="GO:0004518">
    <property type="term" value="F:nuclease activity"/>
    <property type="evidence" value="ECO:0007669"/>
    <property type="project" value="UniProtKB-KW"/>
</dbReference>
<dbReference type="GO" id="GO:0000967">
    <property type="term" value="P:rRNA 5'-end processing"/>
    <property type="evidence" value="ECO:0007669"/>
    <property type="project" value="UniProtKB-UniRule"/>
</dbReference>
<dbReference type="CDD" id="cd16964">
    <property type="entry name" value="YqgF"/>
    <property type="match status" value="1"/>
</dbReference>
<dbReference type="FunFam" id="3.30.420.140:FF:000010">
    <property type="entry name" value="Putative pre-16S rRNA nuclease"/>
    <property type="match status" value="1"/>
</dbReference>
<dbReference type="Gene3D" id="3.30.420.140">
    <property type="entry name" value="YqgF/RNase H-like domain"/>
    <property type="match status" value="1"/>
</dbReference>
<dbReference type="HAMAP" id="MF_00651">
    <property type="entry name" value="Nuclease_YqgF"/>
    <property type="match status" value="1"/>
</dbReference>
<dbReference type="InterPro" id="IPR012337">
    <property type="entry name" value="RNaseH-like_sf"/>
</dbReference>
<dbReference type="InterPro" id="IPR005227">
    <property type="entry name" value="YqgF"/>
</dbReference>
<dbReference type="InterPro" id="IPR006641">
    <property type="entry name" value="YqgF/RNaseH-like_dom"/>
</dbReference>
<dbReference type="InterPro" id="IPR037027">
    <property type="entry name" value="YqgF/RNaseH-like_dom_sf"/>
</dbReference>
<dbReference type="NCBIfam" id="TIGR00250">
    <property type="entry name" value="RNAse_H_YqgF"/>
    <property type="match status" value="1"/>
</dbReference>
<dbReference type="PANTHER" id="PTHR33317">
    <property type="entry name" value="POLYNUCLEOTIDYL TRANSFERASE, RIBONUCLEASE H-LIKE SUPERFAMILY PROTEIN"/>
    <property type="match status" value="1"/>
</dbReference>
<dbReference type="PANTHER" id="PTHR33317:SF4">
    <property type="entry name" value="POLYNUCLEOTIDYL TRANSFERASE, RIBONUCLEASE H-LIKE SUPERFAMILY PROTEIN"/>
    <property type="match status" value="1"/>
</dbReference>
<dbReference type="Pfam" id="PF03652">
    <property type="entry name" value="RuvX"/>
    <property type="match status" value="1"/>
</dbReference>
<dbReference type="SMART" id="SM00732">
    <property type="entry name" value="YqgFc"/>
    <property type="match status" value="1"/>
</dbReference>
<dbReference type="SUPFAM" id="SSF53098">
    <property type="entry name" value="Ribonuclease H-like"/>
    <property type="match status" value="1"/>
</dbReference>
<evidence type="ECO:0000255" key="1">
    <source>
        <dbReference type="HAMAP-Rule" id="MF_00651"/>
    </source>
</evidence>
<accession>B2SIZ4</accession>
<proteinExistence type="inferred from homology"/>
<protein>
    <recommendedName>
        <fullName evidence="1">Putative pre-16S rRNA nuclease</fullName>
        <ecNumber evidence="1">3.1.-.-</ecNumber>
    </recommendedName>
</protein>
<reference key="1">
    <citation type="journal article" date="2008" name="BMC Genomics">
        <title>Genome sequence and rapid evolution of the rice pathogen Xanthomonas oryzae pv. oryzae PXO99A.</title>
        <authorList>
            <person name="Salzberg S.L."/>
            <person name="Sommer D.D."/>
            <person name="Schatz M.C."/>
            <person name="Phillippy A.M."/>
            <person name="Rabinowicz P.D."/>
            <person name="Tsuge S."/>
            <person name="Furutani A."/>
            <person name="Ochiai H."/>
            <person name="Delcher A.L."/>
            <person name="Kelley D."/>
            <person name="Madupu R."/>
            <person name="Puiu D."/>
            <person name="Radune D."/>
            <person name="Shumway M."/>
            <person name="Trapnell C."/>
            <person name="Aparna G."/>
            <person name="Jha G."/>
            <person name="Pandey A."/>
            <person name="Patil P.B."/>
            <person name="Ishihara H."/>
            <person name="Meyer D.F."/>
            <person name="Szurek B."/>
            <person name="Verdier V."/>
            <person name="Koebnik R."/>
            <person name="Dow J.M."/>
            <person name="Ryan R.P."/>
            <person name="Hirata H."/>
            <person name="Tsuyumu S."/>
            <person name="Won Lee S."/>
            <person name="Seo Y.-S."/>
            <person name="Sriariyanum M."/>
            <person name="Ronald P.C."/>
            <person name="Sonti R.V."/>
            <person name="Van Sluys M.-A."/>
            <person name="Leach J.E."/>
            <person name="White F.F."/>
            <person name="Bogdanove A.J."/>
        </authorList>
    </citation>
    <scope>NUCLEOTIDE SEQUENCE [LARGE SCALE GENOMIC DNA]</scope>
    <source>
        <strain>PXO99A</strain>
    </source>
</reference>
<name>YQGF_XANOP</name>